<feature type="chain" id="PRO_0000244185" description="Ribosome maturation factor RimM">
    <location>
        <begin position="1"/>
        <end position="179"/>
    </location>
</feature>
<feature type="domain" description="PRC barrel" evidence="1">
    <location>
        <begin position="96"/>
        <end position="175"/>
    </location>
</feature>
<sequence>MSKQSNKLLHIATIGKSVGLGGDMKLHIKSDFPEQFKKGVSFFINENETLTLSDINHERALIKFVGYNSPEDAKKLTNKNLYTTIERTRKECRLEKDEYFWFDIEGCSVVEDGKVLGIVDELDRMGITNYLCVITDETLVKSGFAKSFLIPFREPFTINTDIKEKIITVIGAMDILEAS</sequence>
<protein>
    <recommendedName>
        <fullName evidence="1">Ribosome maturation factor RimM</fullName>
    </recommendedName>
</protein>
<name>RIMM_SULDN</name>
<organism>
    <name type="scientific">Sulfurimonas denitrificans (strain ATCC 33889 / DSM 1251)</name>
    <name type="common">Thiomicrospira denitrificans (strain ATCC 33889 / DSM 1251)</name>
    <dbReference type="NCBI Taxonomy" id="326298"/>
    <lineage>
        <taxon>Bacteria</taxon>
        <taxon>Pseudomonadati</taxon>
        <taxon>Campylobacterota</taxon>
        <taxon>Epsilonproteobacteria</taxon>
        <taxon>Campylobacterales</taxon>
        <taxon>Sulfurimonadaceae</taxon>
        <taxon>Sulfurimonas</taxon>
    </lineage>
</organism>
<dbReference type="EMBL" id="CP000153">
    <property type="protein sequence ID" value="ABB43734.1"/>
    <property type="molecule type" value="Genomic_DNA"/>
</dbReference>
<dbReference type="RefSeq" id="WP_011372088.1">
    <property type="nucleotide sequence ID" value="NC_007575.1"/>
</dbReference>
<dbReference type="SMR" id="Q30TE7"/>
<dbReference type="STRING" id="326298.Suden_0453"/>
<dbReference type="KEGG" id="tdn:Suden_0453"/>
<dbReference type="eggNOG" id="COG0806">
    <property type="taxonomic scope" value="Bacteria"/>
</dbReference>
<dbReference type="HOGENOM" id="CLU_077636_2_0_7"/>
<dbReference type="OrthoDB" id="9810331at2"/>
<dbReference type="Proteomes" id="UP000002714">
    <property type="component" value="Chromosome"/>
</dbReference>
<dbReference type="GO" id="GO:0005737">
    <property type="term" value="C:cytoplasm"/>
    <property type="evidence" value="ECO:0007669"/>
    <property type="project" value="UniProtKB-SubCell"/>
</dbReference>
<dbReference type="GO" id="GO:0005840">
    <property type="term" value="C:ribosome"/>
    <property type="evidence" value="ECO:0007669"/>
    <property type="project" value="InterPro"/>
</dbReference>
<dbReference type="GO" id="GO:0043022">
    <property type="term" value="F:ribosome binding"/>
    <property type="evidence" value="ECO:0007669"/>
    <property type="project" value="InterPro"/>
</dbReference>
<dbReference type="GO" id="GO:0042274">
    <property type="term" value="P:ribosomal small subunit biogenesis"/>
    <property type="evidence" value="ECO:0007669"/>
    <property type="project" value="UniProtKB-UniRule"/>
</dbReference>
<dbReference type="GO" id="GO:0006364">
    <property type="term" value="P:rRNA processing"/>
    <property type="evidence" value="ECO:0007669"/>
    <property type="project" value="UniProtKB-UniRule"/>
</dbReference>
<dbReference type="Gene3D" id="2.30.30.240">
    <property type="entry name" value="PRC-barrel domain"/>
    <property type="match status" value="1"/>
</dbReference>
<dbReference type="Gene3D" id="2.40.30.60">
    <property type="entry name" value="RimM"/>
    <property type="match status" value="1"/>
</dbReference>
<dbReference type="HAMAP" id="MF_00014">
    <property type="entry name" value="Ribosome_mat_RimM"/>
    <property type="match status" value="1"/>
</dbReference>
<dbReference type="InterPro" id="IPR011033">
    <property type="entry name" value="PRC_barrel-like_sf"/>
</dbReference>
<dbReference type="InterPro" id="IPR056792">
    <property type="entry name" value="PRC_RimM"/>
</dbReference>
<dbReference type="InterPro" id="IPR011961">
    <property type="entry name" value="RimM"/>
</dbReference>
<dbReference type="InterPro" id="IPR002676">
    <property type="entry name" value="RimM_N"/>
</dbReference>
<dbReference type="InterPro" id="IPR036976">
    <property type="entry name" value="RimM_N_sf"/>
</dbReference>
<dbReference type="InterPro" id="IPR009000">
    <property type="entry name" value="Transl_B-barrel_sf"/>
</dbReference>
<dbReference type="NCBIfam" id="TIGR02273">
    <property type="entry name" value="16S_RimM"/>
    <property type="match status" value="1"/>
</dbReference>
<dbReference type="PANTHER" id="PTHR33692">
    <property type="entry name" value="RIBOSOME MATURATION FACTOR RIMM"/>
    <property type="match status" value="1"/>
</dbReference>
<dbReference type="PANTHER" id="PTHR33692:SF1">
    <property type="entry name" value="RIBOSOME MATURATION FACTOR RIMM"/>
    <property type="match status" value="1"/>
</dbReference>
<dbReference type="Pfam" id="PF24986">
    <property type="entry name" value="PRC_RimM"/>
    <property type="match status" value="1"/>
</dbReference>
<dbReference type="Pfam" id="PF01782">
    <property type="entry name" value="RimM"/>
    <property type="match status" value="1"/>
</dbReference>
<dbReference type="SUPFAM" id="SSF50346">
    <property type="entry name" value="PRC-barrel domain"/>
    <property type="match status" value="1"/>
</dbReference>
<dbReference type="SUPFAM" id="SSF50447">
    <property type="entry name" value="Translation proteins"/>
    <property type="match status" value="1"/>
</dbReference>
<comment type="function">
    <text evidence="1">An accessory protein needed during the final step in the assembly of 30S ribosomal subunit, possibly for assembly of the head region. Essential for efficient processing of 16S rRNA. May be needed both before and after RbfA during the maturation of 16S rRNA. It has affinity for free ribosomal 30S subunits but not for 70S ribosomes.</text>
</comment>
<comment type="subunit">
    <text evidence="1">Binds ribosomal protein uS19.</text>
</comment>
<comment type="subcellular location">
    <subcellularLocation>
        <location evidence="1">Cytoplasm</location>
    </subcellularLocation>
</comment>
<comment type="domain">
    <text evidence="1">The PRC barrel domain binds ribosomal protein uS19.</text>
</comment>
<comment type="similarity">
    <text evidence="1">Belongs to the RimM family.</text>
</comment>
<keyword id="KW-0143">Chaperone</keyword>
<keyword id="KW-0963">Cytoplasm</keyword>
<keyword id="KW-1185">Reference proteome</keyword>
<keyword id="KW-0690">Ribosome biogenesis</keyword>
<keyword id="KW-0698">rRNA processing</keyword>
<evidence type="ECO:0000255" key="1">
    <source>
        <dbReference type="HAMAP-Rule" id="MF_00014"/>
    </source>
</evidence>
<accession>Q30TE7</accession>
<reference key="1">
    <citation type="journal article" date="2008" name="Appl. Environ. Microbiol.">
        <title>Genome of the epsilonproteobacterial chemolithoautotroph Sulfurimonas denitrificans.</title>
        <authorList>
            <person name="Sievert S.M."/>
            <person name="Scott K.M."/>
            <person name="Klotz M.G."/>
            <person name="Chain P.S.G."/>
            <person name="Hauser L.J."/>
            <person name="Hemp J."/>
            <person name="Huegler M."/>
            <person name="Land M."/>
            <person name="Lapidus A."/>
            <person name="Larimer F.W."/>
            <person name="Lucas S."/>
            <person name="Malfatti S.A."/>
            <person name="Meyer F."/>
            <person name="Paulsen I.T."/>
            <person name="Ren Q."/>
            <person name="Simon J."/>
            <person name="Bailey K."/>
            <person name="Diaz E."/>
            <person name="Fitzpatrick K.A."/>
            <person name="Glover B."/>
            <person name="Gwatney N."/>
            <person name="Korajkic A."/>
            <person name="Long A."/>
            <person name="Mobberley J.M."/>
            <person name="Pantry S.N."/>
            <person name="Pazder G."/>
            <person name="Peterson S."/>
            <person name="Quintanilla J.D."/>
            <person name="Sprinkle R."/>
            <person name="Stephens J."/>
            <person name="Thomas P."/>
            <person name="Vaughn R."/>
            <person name="Weber M.J."/>
            <person name="Wooten L.L."/>
        </authorList>
    </citation>
    <scope>NUCLEOTIDE SEQUENCE [LARGE SCALE GENOMIC DNA]</scope>
    <source>
        <strain>ATCC 33889 / DSM 1251</strain>
    </source>
</reference>
<gene>
    <name evidence="1" type="primary">rimM</name>
    <name type="ordered locus">Suden_0453</name>
</gene>
<proteinExistence type="inferred from homology"/>